<protein>
    <recommendedName>
        <fullName evidence="1">NAD(P)H dehydrogenase (quinone)</fullName>
        <ecNumber evidence="1">1.6.5.2</ecNumber>
    </recommendedName>
    <alternativeName>
        <fullName>Flavoprotein WrbA</fullName>
    </alternativeName>
    <alternativeName>
        <fullName evidence="1">NAD(P)H:quinone oxidoreductase</fullName>
        <shortName evidence="1">NQO</shortName>
    </alternativeName>
</protein>
<dbReference type="EC" id="1.6.5.2" evidence="1"/>
<dbReference type="EMBL" id="CP001089">
    <property type="protein sequence ID" value="ACD93842.1"/>
    <property type="molecule type" value="Genomic_DNA"/>
</dbReference>
<dbReference type="RefSeq" id="WP_012468201.1">
    <property type="nucleotide sequence ID" value="NC_010814.1"/>
</dbReference>
<dbReference type="SMR" id="B3E9H6"/>
<dbReference type="STRING" id="398767.Glov_0105"/>
<dbReference type="KEGG" id="glo:Glov_0105"/>
<dbReference type="eggNOG" id="COG0655">
    <property type="taxonomic scope" value="Bacteria"/>
</dbReference>
<dbReference type="HOGENOM" id="CLU_051402_0_2_7"/>
<dbReference type="OrthoDB" id="9801479at2"/>
<dbReference type="Proteomes" id="UP000002420">
    <property type="component" value="Chromosome"/>
</dbReference>
<dbReference type="GO" id="GO:0016020">
    <property type="term" value="C:membrane"/>
    <property type="evidence" value="ECO:0007669"/>
    <property type="project" value="TreeGrafter"/>
</dbReference>
<dbReference type="GO" id="GO:0050660">
    <property type="term" value="F:flavin adenine dinucleotide binding"/>
    <property type="evidence" value="ECO:0007669"/>
    <property type="project" value="UniProtKB-UniRule"/>
</dbReference>
<dbReference type="GO" id="GO:0010181">
    <property type="term" value="F:FMN binding"/>
    <property type="evidence" value="ECO:0007669"/>
    <property type="project" value="InterPro"/>
</dbReference>
<dbReference type="GO" id="GO:0051287">
    <property type="term" value="F:NAD binding"/>
    <property type="evidence" value="ECO:0007669"/>
    <property type="project" value="UniProtKB-UniRule"/>
</dbReference>
<dbReference type="GO" id="GO:0050136">
    <property type="term" value="F:NADH:ubiquinone reductase (non-electrogenic) activity"/>
    <property type="evidence" value="ECO:0007669"/>
    <property type="project" value="RHEA"/>
</dbReference>
<dbReference type="GO" id="GO:0050661">
    <property type="term" value="F:NADP binding"/>
    <property type="evidence" value="ECO:0007669"/>
    <property type="project" value="UniProtKB-UniRule"/>
</dbReference>
<dbReference type="GO" id="GO:0008753">
    <property type="term" value="F:NADPH dehydrogenase (quinone) activity"/>
    <property type="evidence" value="ECO:0007669"/>
    <property type="project" value="RHEA"/>
</dbReference>
<dbReference type="FunFam" id="3.40.50.360:FF:000001">
    <property type="entry name" value="NAD(P)H dehydrogenase (Quinone) FQR1-like"/>
    <property type="match status" value="1"/>
</dbReference>
<dbReference type="Gene3D" id="3.40.50.360">
    <property type="match status" value="1"/>
</dbReference>
<dbReference type="HAMAP" id="MF_01017">
    <property type="entry name" value="NQOR"/>
    <property type="match status" value="1"/>
</dbReference>
<dbReference type="InterPro" id="IPR008254">
    <property type="entry name" value="Flavodoxin/NO_synth"/>
</dbReference>
<dbReference type="InterPro" id="IPR029039">
    <property type="entry name" value="Flavoprotein-like_sf"/>
</dbReference>
<dbReference type="InterPro" id="IPR010089">
    <property type="entry name" value="Flavoprotein_WrbA-like"/>
</dbReference>
<dbReference type="InterPro" id="IPR005025">
    <property type="entry name" value="FMN_Rdtase-like_dom"/>
</dbReference>
<dbReference type="InterPro" id="IPR037513">
    <property type="entry name" value="NQO"/>
</dbReference>
<dbReference type="NCBIfam" id="TIGR01755">
    <property type="entry name" value="flav_wrbA"/>
    <property type="match status" value="1"/>
</dbReference>
<dbReference type="NCBIfam" id="NF002999">
    <property type="entry name" value="PRK03767.1"/>
    <property type="match status" value="1"/>
</dbReference>
<dbReference type="PANTHER" id="PTHR30546">
    <property type="entry name" value="FLAVODOXIN-RELATED PROTEIN WRBA-RELATED"/>
    <property type="match status" value="1"/>
</dbReference>
<dbReference type="PANTHER" id="PTHR30546:SF23">
    <property type="entry name" value="FLAVOPROTEIN-LIKE PROTEIN YCP4-RELATED"/>
    <property type="match status" value="1"/>
</dbReference>
<dbReference type="Pfam" id="PF03358">
    <property type="entry name" value="FMN_red"/>
    <property type="match status" value="1"/>
</dbReference>
<dbReference type="SUPFAM" id="SSF52218">
    <property type="entry name" value="Flavoproteins"/>
    <property type="match status" value="1"/>
</dbReference>
<dbReference type="PROSITE" id="PS50902">
    <property type="entry name" value="FLAVODOXIN_LIKE"/>
    <property type="match status" value="1"/>
</dbReference>
<proteinExistence type="inferred from homology"/>
<gene>
    <name type="ordered locus">Glov_0105</name>
</gene>
<comment type="catalytic activity">
    <reaction evidence="1">
        <text>a quinone + NADH + H(+) = a quinol + NAD(+)</text>
        <dbReference type="Rhea" id="RHEA:46160"/>
        <dbReference type="ChEBI" id="CHEBI:15378"/>
        <dbReference type="ChEBI" id="CHEBI:24646"/>
        <dbReference type="ChEBI" id="CHEBI:57540"/>
        <dbReference type="ChEBI" id="CHEBI:57945"/>
        <dbReference type="ChEBI" id="CHEBI:132124"/>
        <dbReference type="EC" id="1.6.5.2"/>
    </reaction>
</comment>
<comment type="catalytic activity">
    <reaction evidence="1">
        <text>a quinone + NADPH + H(+) = a quinol + NADP(+)</text>
        <dbReference type="Rhea" id="RHEA:46164"/>
        <dbReference type="ChEBI" id="CHEBI:15378"/>
        <dbReference type="ChEBI" id="CHEBI:24646"/>
        <dbReference type="ChEBI" id="CHEBI:57783"/>
        <dbReference type="ChEBI" id="CHEBI:58349"/>
        <dbReference type="ChEBI" id="CHEBI:132124"/>
        <dbReference type="EC" id="1.6.5.2"/>
    </reaction>
</comment>
<comment type="cofactor">
    <cofactor evidence="1">
        <name>FMN</name>
        <dbReference type="ChEBI" id="CHEBI:58210"/>
    </cofactor>
    <text evidence="1">Binds 1 FMN per monomer.</text>
</comment>
<comment type="similarity">
    <text evidence="1">Belongs to the WrbA family.</text>
</comment>
<name>NQOR_TRIL1</name>
<evidence type="ECO:0000255" key="1">
    <source>
        <dbReference type="HAMAP-Rule" id="MF_01017"/>
    </source>
</evidence>
<organism>
    <name type="scientific">Trichlorobacter lovleyi (strain ATCC BAA-1151 / DSM 17278 / SZ)</name>
    <name type="common">Geobacter lovleyi</name>
    <dbReference type="NCBI Taxonomy" id="398767"/>
    <lineage>
        <taxon>Bacteria</taxon>
        <taxon>Pseudomonadati</taxon>
        <taxon>Thermodesulfobacteriota</taxon>
        <taxon>Desulfuromonadia</taxon>
        <taxon>Geobacterales</taxon>
        <taxon>Geobacteraceae</taxon>
        <taxon>Trichlorobacter</taxon>
    </lineage>
</organism>
<sequence length="204" mass="21621">MSKIQIVFYSMYGHIHTMAEAVADGVRSVGGCSAELLQVPELISEEVLEKYGAKAARAAFAHIPTATVERLAEADAIIFGTPTRFGNMAAQMRNFLDQTGKLWLSGGLVGKVGSVFASTATQHGGQETTITSFHSTLLHHGMIIVGVPYTEQRLLTMDEISGGSPYGATTLAGGDGSRRPSENELAIARFQGAHVAKITARLTA</sequence>
<keyword id="KW-0285">Flavoprotein</keyword>
<keyword id="KW-0288">FMN</keyword>
<keyword id="KW-0520">NAD</keyword>
<keyword id="KW-0521">NADP</keyword>
<keyword id="KW-0547">Nucleotide-binding</keyword>
<keyword id="KW-0560">Oxidoreductase</keyword>
<keyword id="KW-1185">Reference proteome</keyword>
<reference key="1">
    <citation type="submission" date="2008-05" db="EMBL/GenBank/DDBJ databases">
        <title>Complete sequence of chromosome of Geobacter lovleyi SZ.</title>
        <authorList>
            <consortium name="US DOE Joint Genome Institute"/>
            <person name="Lucas S."/>
            <person name="Copeland A."/>
            <person name="Lapidus A."/>
            <person name="Glavina del Rio T."/>
            <person name="Dalin E."/>
            <person name="Tice H."/>
            <person name="Bruce D."/>
            <person name="Goodwin L."/>
            <person name="Pitluck S."/>
            <person name="Chertkov O."/>
            <person name="Meincke L."/>
            <person name="Brettin T."/>
            <person name="Detter J.C."/>
            <person name="Han C."/>
            <person name="Tapia R."/>
            <person name="Kuske C.R."/>
            <person name="Schmutz J."/>
            <person name="Larimer F."/>
            <person name="Land M."/>
            <person name="Hauser L."/>
            <person name="Kyrpides N."/>
            <person name="Mikhailova N."/>
            <person name="Sung Y."/>
            <person name="Fletcher K.E."/>
            <person name="Ritalahti K.M."/>
            <person name="Loeffler F.E."/>
            <person name="Richardson P."/>
        </authorList>
    </citation>
    <scope>NUCLEOTIDE SEQUENCE [LARGE SCALE GENOMIC DNA]</scope>
    <source>
        <strain>ATCC BAA-1151 / DSM 17278 / SZ</strain>
    </source>
</reference>
<feature type="chain" id="PRO_1000200631" description="NAD(P)H dehydrogenase (quinone)">
    <location>
        <begin position="1"/>
        <end position="204"/>
    </location>
</feature>
<feature type="domain" description="Flavodoxin-like" evidence="1">
    <location>
        <begin position="4"/>
        <end position="195"/>
    </location>
</feature>
<feature type="binding site" evidence="1">
    <location>
        <begin position="10"/>
        <end position="15"/>
    </location>
    <ligand>
        <name>FMN</name>
        <dbReference type="ChEBI" id="CHEBI:58210"/>
    </ligand>
</feature>
<feature type="binding site" evidence="1">
    <location>
        <position position="12"/>
    </location>
    <ligand>
        <name>NAD(+)</name>
        <dbReference type="ChEBI" id="CHEBI:57540"/>
    </ligand>
</feature>
<feature type="binding site" evidence="1">
    <location>
        <begin position="83"/>
        <end position="85"/>
    </location>
    <ligand>
        <name>FMN</name>
        <dbReference type="ChEBI" id="CHEBI:58210"/>
    </ligand>
</feature>
<feature type="binding site" evidence="1">
    <location>
        <position position="103"/>
    </location>
    <ligand>
        <name>substrate</name>
    </ligand>
</feature>
<feature type="binding site" evidence="1">
    <location>
        <begin position="118"/>
        <end position="124"/>
    </location>
    <ligand>
        <name>FMN</name>
        <dbReference type="ChEBI" id="CHEBI:58210"/>
    </ligand>
</feature>
<feature type="binding site" evidence="1">
    <location>
        <position position="139"/>
    </location>
    <ligand>
        <name>FMN</name>
        <dbReference type="ChEBI" id="CHEBI:58210"/>
    </ligand>
</feature>
<accession>B3E9H6</accession>